<evidence type="ECO:0000255" key="1">
    <source>
        <dbReference type="HAMAP-Rule" id="MF_00219"/>
    </source>
</evidence>
<gene>
    <name evidence="1" type="primary">pyrC</name>
    <name type="ordered locus">A1S_1066</name>
</gene>
<protein>
    <recommendedName>
        <fullName evidence="1">Dihydroorotase</fullName>
        <shortName evidence="1">DHOase</shortName>
        <ecNumber evidence="1">3.5.2.3</ecNumber>
    </recommendedName>
</protein>
<dbReference type="EC" id="3.5.2.3" evidence="1"/>
<dbReference type="EMBL" id="CP000521">
    <property type="protein sequence ID" value="ABO11497.2"/>
    <property type="molecule type" value="Genomic_DNA"/>
</dbReference>
<dbReference type="RefSeq" id="WP_001084867.1">
    <property type="nucleotide sequence ID" value="NZ_CP053098.1"/>
</dbReference>
<dbReference type="SMR" id="A3M3K3"/>
<dbReference type="GeneID" id="92795645"/>
<dbReference type="KEGG" id="acb:A1S_1066"/>
<dbReference type="HOGENOM" id="CLU_041558_1_0_6"/>
<dbReference type="UniPathway" id="UPA00070">
    <property type="reaction ID" value="UER00117"/>
</dbReference>
<dbReference type="GO" id="GO:0005829">
    <property type="term" value="C:cytosol"/>
    <property type="evidence" value="ECO:0007669"/>
    <property type="project" value="TreeGrafter"/>
</dbReference>
<dbReference type="GO" id="GO:0004151">
    <property type="term" value="F:dihydroorotase activity"/>
    <property type="evidence" value="ECO:0007669"/>
    <property type="project" value="UniProtKB-UniRule"/>
</dbReference>
<dbReference type="GO" id="GO:0008270">
    <property type="term" value="F:zinc ion binding"/>
    <property type="evidence" value="ECO:0007669"/>
    <property type="project" value="UniProtKB-UniRule"/>
</dbReference>
<dbReference type="GO" id="GO:0006207">
    <property type="term" value="P:'de novo' pyrimidine nucleobase biosynthetic process"/>
    <property type="evidence" value="ECO:0007669"/>
    <property type="project" value="TreeGrafter"/>
</dbReference>
<dbReference type="GO" id="GO:0044205">
    <property type="term" value="P:'de novo' UMP biosynthetic process"/>
    <property type="evidence" value="ECO:0007669"/>
    <property type="project" value="UniProtKB-UniRule"/>
</dbReference>
<dbReference type="CDD" id="cd01294">
    <property type="entry name" value="DHOase"/>
    <property type="match status" value="1"/>
</dbReference>
<dbReference type="FunFam" id="3.20.20.140:FF:000006">
    <property type="entry name" value="Dihydroorotase"/>
    <property type="match status" value="1"/>
</dbReference>
<dbReference type="Gene3D" id="3.20.20.140">
    <property type="entry name" value="Metal-dependent hydrolases"/>
    <property type="match status" value="1"/>
</dbReference>
<dbReference type="HAMAP" id="MF_00219">
    <property type="entry name" value="PyrC_classII"/>
    <property type="match status" value="1"/>
</dbReference>
<dbReference type="InterPro" id="IPR006680">
    <property type="entry name" value="Amidohydro-rel"/>
</dbReference>
<dbReference type="InterPro" id="IPR004721">
    <property type="entry name" value="DHOdimr"/>
</dbReference>
<dbReference type="InterPro" id="IPR002195">
    <property type="entry name" value="Dihydroorotase_CS"/>
</dbReference>
<dbReference type="InterPro" id="IPR032466">
    <property type="entry name" value="Metal_Hydrolase"/>
</dbReference>
<dbReference type="NCBIfam" id="TIGR00856">
    <property type="entry name" value="pyrC_dimer"/>
    <property type="match status" value="1"/>
</dbReference>
<dbReference type="PANTHER" id="PTHR43137">
    <property type="entry name" value="DIHYDROOROTASE"/>
    <property type="match status" value="1"/>
</dbReference>
<dbReference type="PANTHER" id="PTHR43137:SF1">
    <property type="entry name" value="DIHYDROOROTASE"/>
    <property type="match status" value="1"/>
</dbReference>
<dbReference type="Pfam" id="PF01979">
    <property type="entry name" value="Amidohydro_1"/>
    <property type="match status" value="1"/>
</dbReference>
<dbReference type="PIRSF" id="PIRSF001237">
    <property type="entry name" value="DHOdimr"/>
    <property type="match status" value="1"/>
</dbReference>
<dbReference type="SUPFAM" id="SSF51556">
    <property type="entry name" value="Metallo-dependent hydrolases"/>
    <property type="match status" value="1"/>
</dbReference>
<dbReference type="PROSITE" id="PS00482">
    <property type="entry name" value="DIHYDROOROTASE_1"/>
    <property type="match status" value="1"/>
</dbReference>
<dbReference type="PROSITE" id="PS00483">
    <property type="entry name" value="DIHYDROOROTASE_2"/>
    <property type="match status" value="1"/>
</dbReference>
<organism>
    <name type="scientific">Acinetobacter baumannii (strain ATCC 17978 / DSM 105126 / CIP 53.77 / LMG 1025 / NCDC KC755 / 5377)</name>
    <dbReference type="NCBI Taxonomy" id="400667"/>
    <lineage>
        <taxon>Bacteria</taxon>
        <taxon>Pseudomonadati</taxon>
        <taxon>Pseudomonadota</taxon>
        <taxon>Gammaproteobacteria</taxon>
        <taxon>Moraxellales</taxon>
        <taxon>Moraxellaceae</taxon>
        <taxon>Acinetobacter</taxon>
        <taxon>Acinetobacter calcoaceticus/baumannii complex</taxon>
    </lineage>
</organism>
<feature type="chain" id="PRO_1000100034" description="Dihydroorotase">
    <location>
        <begin position="1"/>
        <end position="344"/>
    </location>
</feature>
<feature type="active site" evidence="1">
    <location>
        <position position="247"/>
    </location>
</feature>
<feature type="binding site" evidence="1">
    <location>
        <position position="13"/>
    </location>
    <ligand>
        <name>Zn(2+)</name>
        <dbReference type="ChEBI" id="CHEBI:29105"/>
        <label>1</label>
    </ligand>
</feature>
<feature type="binding site" evidence="1">
    <location>
        <begin position="15"/>
        <end position="17"/>
    </location>
    <ligand>
        <name>substrate</name>
    </ligand>
</feature>
<feature type="binding site" evidence="1">
    <location>
        <position position="15"/>
    </location>
    <ligand>
        <name>Zn(2+)</name>
        <dbReference type="ChEBI" id="CHEBI:29105"/>
        <label>1</label>
    </ligand>
</feature>
<feature type="binding site" evidence="1">
    <location>
        <position position="41"/>
    </location>
    <ligand>
        <name>substrate</name>
    </ligand>
</feature>
<feature type="binding site" description="via carbamate group" evidence="1">
    <location>
        <position position="99"/>
    </location>
    <ligand>
        <name>Zn(2+)</name>
        <dbReference type="ChEBI" id="CHEBI:29105"/>
        <label>1</label>
    </ligand>
</feature>
<feature type="binding site" description="via carbamate group" evidence="1">
    <location>
        <position position="99"/>
    </location>
    <ligand>
        <name>Zn(2+)</name>
        <dbReference type="ChEBI" id="CHEBI:29105"/>
        <label>2</label>
    </ligand>
</feature>
<feature type="binding site" evidence="1">
    <location>
        <position position="136"/>
    </location>
    <ligand>
        <name>substrate</name>
    </ligand>
</feature>
<feature type="binding site" evidence="1">
    <location>
        <position position="136"/>
    </location>
    <ligand>
        <name>Zn(2+)</name>
        <dbReference type="ChEBI" id="CHEBI:29105"/>
        <label>2</label>
    </ligand>
</feature>
<feature type="binding site" evidence="1">
    <location>
        <position position="174"/>
    </location>
    <ligand>
        <name>Zn(2+)</name>
        <dbReference type="ChEBI" id="CHEBI:29105"/>
        <label>2</label>
    </ligand>
</feature>
<feature type="binding site" evidence="1">
    <location>
        <position position="219"/>
    </location>
    <ligand>
        <name>substrate</name>
    </ligand>
</feature>
<feature type="binding site" evidence="1">
    <location>
        <position position="247"/>
    </location>
    <ligand>
        <name>Zn(2+)</name>
        <dbReference type="ChEBI" id="CHEBI:29105"/>
        <label>1</label>
    </ligand>
</feature>
<feature type="binding site" evidence="1">
    <location>
        <position position="251"/>
    </location>
    <ligand>
        <name>substrate</name>
    </ligand>
</feature>
<feature type="binding site" evidence="1">
    <location>
        <position position="263"/>
    </location>
    <ligand>
        <name>substrate</name>
    </ligand>
</feature>
<feature type="modified residue" description="N6-carboxylysine" evidence="1">
    <location>
        <position position="99"/>
    </location>
</feature>
<proteinExistence type="inferred from homology"/>
<sequence length="344" mass="38724">MNSITLLQPDDWHAHLRDGLALKRTVPDLAKQFARAICMPNLVPPVKTVEEALAYRERILAHVPEGNNFDPRMVLYFTDHTSPDEVRKIKESEHVNAIKLYPAGATTNSDNGVSDIRKVYAVIEQLEEHQVPLLLHGEVTHNHVDIFDREKRFLDEVLSPLLKQFPKLKVVLEHITTSDAAHFVLEQDRNVAATITPQHLLFNRNDMLVGGIKPHFYCLPILKRQTHQTTLLEVATSGNPKFFLGTDSAPHAQNAKENACGCAGCYSAPNAIELYAQAFDQVGKLERLEGFASHFGADFYGLPRNTSTITLVKEDNLVPESFDYLDNQKIIPLHAGKTLQWRKV</sequence>
<name>PYRC_ACIBT</name>
<keyword id="KW-0378">Hydrolase</keyword>
<keyword id="KW-0479">Metal-binding</keyword>
<keyword id="KW-0665">Pyrimidine biosynthesis</keyword>
<keyword id="KW-0862">Zinc</keyword>
<reference key="1">
    <citation type="journal article" date="2007" name="Genes Dev.">
        <title>New insights into Acinetobacter baumannii pathogenesis revealed by high-density pyrosequencing and transposon mutagenesis.</title>
        <authorList>
            <person name="Smith M.G."/>
            <person name="Gianoulis T.A."/>
            <person name="Pukatzki S."/>
            <person name="Mekalanos J.J."/>
            <person name="Ornston L.N."/>
            <person name="Gerstein M."/>
            <person name="Snyder M."/>
        </authorList>
    </citation>
    <scope>NUCLEOTIDE SEQUENCE [LARGE SCALE GENOMIC DNA]</scope>
    <source>
        <strain>ATCC 17978 / DSM 105126 / CIP 53.77 / LMG 1025 / NCDC KC755 / 5377</strain>
    </source>
</reference>
<comment type="function">
    <text evidence="1">Catalyzes the reversible cyclization of carbamoyl aspartate to dihydroorotate.</text>
</comment>
<comment type="catalytic activity">
    <reaction evidence="1">
        <text>(S)-dihydroorotate + H2O = N-carbamoyl-L-aspartate + H(+)</text>
        <dbReference type="Rhea" id="RHEA:24296"/>
        <dbReference type="ChEBI" id="CHEBI:15377"/>
        <dbReference type="ChEBI" id="CHEBI:15378"/>
        <dbReference type="ChEBI" id="CHEBI:30864"/>
        <dbReference type="ChEBI" id="CHEBI:32814"/>
        <dbReference type="EC" id="3.5.2.3"/>
    </reaction>
</comment>
<comment type="cofactor">
    <cofactor evidence="1">
        <name>Zn(2+)</name>
        <dbReference type="ChEBI" id="CHEBI:29105"/>
    </cofactor>
    <text evidence="1">Binds 2 Zn(2+) ions per subunit.</text>
</comment>
<comment type="pathway">
    <text evidence="1">Pyrimidine metabolism; UMP biosynthesis via de novo pathway; (S)-dihydroorotate from bicarbonate: step 3/3.</text>
</comment>
<comment type="subunit">
    <text evidence="1">Homodimer.</text>
</comment>
<comment type="similarity">
    <text evidence="1">Belongs to the metallo-dependent hydrolases superfamily. DHOase family. Class II DHOase subfamily.</text>
</comment>
<accession>A3M3K3</accession>